<dbReference type="EMBL" id="AE005674">
    <property type="protein sequence ID" value="AAN42043.1"/>
    <property type="molecule type" value="Genomic_DNA"/>
</dbReference>
<dbReference type="EMBL" id="AE014073">
    <property type="protein sequence ID" value="AAP15921.1"/>
    <property type="molecule type" value="Genomic_DNA"/>
</dbReference>
<dbReference type="RefSeq" id="NP_706336.1">
    <property type="nucleotide sequence ID" value="NC_004337.2"/>
</dbReference>
<dbReference type="RefSeq" id="WP_000680312.1">
    <property type="nucleotide sequence ID" value="NZ_WPGW01000052.1"/>
</dbReference>
<dbReference type="SMR" id="P0AAR9"/>
<dbReference type="STRING" id="198214.SF0387"/>
<dbReference type="PaxDb" id="198214-SF0387"/>
<dbReference type="GeneID" id="1027701"/>
<dbReference type="KEGG" id="sfl:SF0387"/>
<dbReference type="KEGG" id="sfx:S0393"/>
<dbReference type="PATRIC" id="fig|198214.7.peg.445"/>
<dbReference type="HOGENOM" id="CLU_052011_3_1_6"/>
<dbReference type="Proteomes" id="UP000001006">
    <property type="component" value="Chromosome"/>
</dbReference>
<dbReference type="Proteomes" id="UP000002673">
    <property type="component" value="Chromosome"/>
</dbReference>
<dbReference type="GO" id="GO:0015627">
    <property type="term" value="C:type II protein secretion system complex"/>
    <property type="evidence" value="ECO:0007669"/>
    <property type="project" value="TreeGrafter"/>
</dbReference>
<dbReference type="GO" id="GO:0003677">
    <property type="term" value="F:DNA binding"/>
    <property type="evidence" value="ECO:0007669"/>
    <property type="project" value="InterPro"/>
</dbReference>
<dbReference type="GO" id="GO:0006281">
    <property type="term" value="P:DNA repair"/>
    <property type="evidence" value="ECO:0007669"/>
    <property type="project" value="InterPro"/>
</dbReference>
<dbReference type="GO" id="GO:0015628">
    <property type="term" value="P:protein secretion by the type II secretion system"/>
    <property type="evidence" value="ECO:0007669"/>
    <property type="project" value="TreeGrafter"/>
</dbReference>
<dbReference type="FunFam" id="1.10.150.280:FF:000001">
    <property type="entry name" value="Competence protein ComEA helix-hairpin-helix repeat region"/>
    <property type="match status" value="1"/>
</dbReference>
<dbReference type="Gene3D" id="1.10.150.280">
    <property type="entry name" value="AF1531-like domain"/>
    <property type="match status" value="1"/>
</dbReference>
<dbReference type="InterPro" id="IPR004509">
    <property type="entry name" value="Competence_ComEA_HhH"/>
</dbReference>
<dbReference type="InterPro" id="IPR051675">
    <property type="entry name" value="Endo/Exo/Phosphatase_dom_1"/>
</dbReference>
<dbReference type="InterPro" id="IPR003583">
    <property type="entry name" value="Hlx-hairpin-Hlx_DNA-bd_motif"/>
</dbReference>
<dbReference type="InterPro" id="IPR010994">
    <property type="entry name" value="RuvA_2-like"/>
</dbReference>
<dbReference type="NCBIfam" id="TIGR00426">
    <property type="entry name" value="competence protein ComEA helix-hairpin-helix repeat region"/>
    <property type="match status" value="1"/>
</dbReference>
<dbReference type="PANTHER" id="PTHR21180">
    <property type="entry name" value="ENDONUCLEASE/EXONUCLEASE/PHOSPHATASE FAMILY DOMAIN-CONTAINING PROTEIN 1"/>
    <property type="match status" value="1"/>
</dbReference>
<dbReference type="PANTHER" id="PTHR21180:SF32">
    <property type="entry name" value="ENDONUCLEASE_EXONUCLEASE_PHOSPHATASE FAMILY DOMAIN-CONTAINING PROTEIN 1"/>
    <property type="match status" value="1"/>
</dbReference>
<dbReference type="Pfam" id="PF12836">
    <property type="entry name" value="HHH_3"/>
    <property type="match status" value="1"/>
</dbReference>
<dbReference type="SMART" id="SM00278">
    <property type="entry name" value="HhH1"/>
    <property type="match status" value="2"/>
</dbReference>
<dbReference type="SUPFAM" id="SSF47781">
    <property type="entry name" value="RuvA domain 2-like"/>
    <property type="match status" value="1"/>
</dbReference>
<accession>P0AAR9</accession>
<accession>P77415</accession>
<feature type="signal peptide" evidence="1">
    <location>
        <begin position="1"/>
        <end position="25"/>
    </location>
</feature>
<feature type="chain" id="PRO_0000042557" description="Uncharacterized protein YbaV">
    <location>
        <begin position="26"/>
        <end position="123"/>
    </location>
</feature>
<feature type="domain" description="HhH 1">
    <location>
        <begin position="60"/>
        <end position="90"/>
    </location>
</feature>
<feature type="domain" description="HhH 2">
    <location>
        <begin position="91"/>
        <end position="120"/>
    </location>
</feature>
<feature type="region of interest" description="Disordered" evidence="2">
    <location>
        <begin position="40"/>
        <end position="62"/>
    </location>
</feature>
<feature type="compositionally biased region" description="Low complexity" evidence="2">
    <location>
        <begin position="40"/>
        <end position="53"/>
    </location>
</feature>
<organism>
    <name type="scientific">Shigella flexneri</name>
    <dbReference type="NCBI Taxonomy" id="623"/>
    <lineage>
        <taxon>Bacteria</taxon>
        <taxon>Pseudomonadati</taxon>
        <taxon>Pseudomonadota</taxon>
        <taxon>Gammaproteobacteria</taxon>
        <taxon>Enterobacterales</taxon>
        <taxon>Enterobacteriaceae</taxon>
        <taxon>Shigella</taxon>
    </lineage>
</organism>
<keyword id="KW-1185">Reference proteome</keyword>
<keyword id="KW-0677">Repeat</keyword>
<keyword id="KW-0732">Signal</keyword>
<sequence length="123" mass="12704">MKHGIKALLITLSLACAGMSHSALAAASVAKPTAVETKAEAPAAQSKAAVPAKASDEEGTRVSINNASAEELARAMNGVGLKKAQAIVSYREEYGPFKTVEDLKQVPGMGNSLVERNLAVLTL</sequence>
<evidence type="ECO:0000255" key="1"/>
<evidence type="ECO:0000256" key="2">
    <source>
        <dbReference type="SAM" id="MobiDB-lite"/>
    </source>
</evidence>
<reference key="1">
    <citation type="journal article" date="2002" name="Nucleic Acids Res.">
        <title>Genome sequence of Shigella flexneri 2a: insights into pathogenicity through comparison with genomes of Escherichia coli K12 and O157.</title>
        <authorList>
            <person name="Jin Q."/>
            <person name="Yuan Z."/>
            <person name="Xu J."/>
            <person name="Wang Y."/>
            <person name="Shen Y."/>
            <person name="Lu W."/>
            <person name="Wang J."/>
            <person name="Liu H."/>
            <person name="Yang J."/>
            <person name="Yang F."/>
            <person name="Zhang X."/>
            <person name="Zhang J."/>
            <person name="Yang G."/>
            <person name="Wu H."/>
            <person name="Qu D."/>
            <person name="Dong J."/>
            <person name="Sun L."/>
            <person name="Xue Y."/>
            <person name="Zhao A."/>
            <person name="Gao Y."/>
            <person name="Zhu J."/>
            <person name="Kan B."/>
            <person name="Ding K."/>
            <person name="Chen S."/>
            <person name="Cheng H."/>
            <person name="Yao Z."/>
            <person name="He B."/>
            <person name="Chen R."/>
            <person name="Ma D."/>
            <person name="Qiang B."/>
            <person name="Wen Y."/>
            <person name="Hou Y."/>
            <person name="Yu J."/>
        </authorList>
    </citation>
    <scope>NUCLEOTIDE SEQUENCE [LARGE SCALE GENOMIC DNA]</scope>
    <source>
        <strain>301 / Serotype 2a</strain>
    </source>
</reference>
<reference key="2">
    <citation type="journal article" date="2003" name="Infect. Immun.">
        <title>Complete genome sequence and comparative genomics of Shigella flexneri serotype 2a strain 2457T.</title>
        <authorList>
            <person name="Wei J."/>
            <person name="Goldberg M.B."/>
            <person name="Burland V."/>
            <person name="Venkatesan M.M."/>
            <person name="Deng W."/>
            <person name="Fournier G."/>
            <person name="Mayhew G.F."/>
            <person name="Plunkett G. III"/>
            <person name="Rose D.J."/>
            <person name="Darling A."/>
            <person name="Mau B."/>
            <person name="Perna N.T."/>
            <person name="Payne S.M."/>
            <person name="Runyen-Janecky L.J."/>
            <person name="Zhou S."/>
            <person name="Schwartz D.C."/>
            <person name="Blattner F.R."/>
        </authorList>
    </citation>
    <scope>NUCLEOTIDE SEQUENCE [LARGE SCALE GENOMIC DNA]</scope>
    <source>
        <strain>ATCC 700930 / 2457T / Serotype 2a</strain>
    </source>
</reference>
<protein>
    <recommendedName>
        <fullName>Uncharacterized protein YbaV</fullName>
    </recommendedName>
</protein>
<gene>
    <name type="primary">ybaV</name>
    <name type="ordered locus">SF0387</name>
    <name type="ordered locus">S0393</name>
</gene>
<proteinExistence type="inferred from homology"/>
<name>YBAV_SHIFL</name>